<dbReference type="EC" id="7.4.2.8" evidence="1"/>
<dbReference type="EMBL" id="CP001472">
    <property type="protein sequence ID" value="ACO33749.1"/>
    <property type="molecule type" value="Genomic_DNA"/>
</dbReference>
<dbReference type="RefSeq" id="WP_015898033.1">
    <property type="nucleotide sequence ID" value="NC_012483.1"/>
</dbReference>
<dbReference type="SMR" id="C1F4E1"/>
<dbReference type="FunCoup" id="C1F4E1">
    <property type="interactions" value="544"/>
</dbReference>
<dbReference type="STRING" id="240015.ACP_2983"/>
<dbReference type="KEGG" id="aca:ACP_2983"/>
<dbReference type="eggNOG" id="COG0653">
    <property type="taxonomic scope" value="Bacteria"/>
</dbReference>
<dbReference type="HOGENOM" id="CLU_005314_3_0_0"/>
<dbReference type="InParanoid" id="C1F4E1"/>
<dbReference type="OrthoDB" id="9805579at2"/>
<dbReference type="Proteomes" id="UP000002207">
    <property type="component" value="Chromosome"/>
</dbReference>
<dbReference type="GO" id="GO:0031522">
    <property type="term" value="C:cell envelope Sec protein transport complex"/>
    <property type="evidence" value="ECO:0007669"/>
    <property type="project" value="TreeGrafter"/>
</dbReference>
<dbReference type="GO" id="GO:0005829">
    <property type="term" value="C:cytosol"/>
    <property type="evidence" value="ECO:0007669"/>
    <property type="project" value="TreeGrafter"/>
</dbReference>
<dbReference type="GO" id="GO:0005886">
    <property type="term" value="C:plasma membrane"/>
    <property type="evidence" value="ECO:0007669"/>
    <property type="project" value="UniProtKB-SubCell"/>
</dbReference>
<dbReference type="GO" id="GO:0005524">
    <property type="term" value="F:ATP binding"/>
    <property type="evidence" value="ECO:0007669"/>
    <property type="project" value="UniProtKB-UniRule"/>
</dbReference>
<dbReference type="GO" id="GO:0046872">
    <property type="term" value="F:metal ion binding"/>
    <property type="evidence" value="ECO:0007669"/>
    <property type="project" value="UniProtKB-KW"/>
</dbReference>
<dbReference type="GO" id="GO:0008564">
    <property type="term" value="F:protein-exporting ATPase activity"/>
    <property type="evidence" value="ECO:0007669"/>
    <property type="project" value="UniProtKB-EC"/>
</dbReference>
<dbReference type="GO" id="GO:0065002">
    <property type="term" value="P:intracellular protein transmembrane transport"/>
    <property type="evidence" value="ECO:0007669"/>
    <property type="project" value="UniProtKB-UniRule"/>
</dbReference>
<dbReference type="GO" id="GO:0017038">
    <property type="term" value="P:protein import"/>
    <property type="evidence" value="ECO:0007669"/>
    <property type="project" value="InterPro"/>
</dbReference>
<dbReference type="GO" id="GO:0006605">
    <property type="term" value="P:protein targeting"/>
    <property type="evidence" value="ECO:0007669"/>
    <property type="project" value="UniProtKB-UniRule"/>
</dbReference>
<dbReference type="GO" id="GO:0043952">
    <property type="term" value="P:protein transport by the Sec complex"/>
    <property type="evidence" value="ECO:0007669"/>
    <property type="project" value="TreeGrafter"/>
</dbReference>
<dbReference type="CDD" id="cd17928">
    <property type="entry name" value="DEXDc_SecA"/>
    <property type="match status" value="1"/>
</dbReference>
<dbReference type="CDD" id="cd18803">
    <property type="entry name" value="SF2_C_secA"/>
    <property type="match status" value="1"/>
</dbReference>
<dbReference type="FunFam" id="3.40.50.300:FF:000334">
    <property type="entry name" value="Protein translocase subunit SecA"/>
    <property type="match status" value="1"/>
</dbReference>
<dbReference type="FunFam" id="3.90.1440.10:FF:000002">
    <property type="entry name" value="Protein translocase subunit SecA"/>
    <property type="match status" value="1"/>
</dbReference>
<dbReference type="Gene3D" id="3.10.450.50">
    <property type="match status" value="1"/>
</dbReference>
<dbReference type="Gene3D" id="1.10.3060.10">
    <property type="entry name" value="Helical scaffold and wing domains of SecA"/>
    <property type="match status" value="1"/>
</dbReference>
<dbReference type="Gene3D" id="3.40.50.300">
    <property type="entry name" value="P-loop containing nucleotide triphosphate hydrolases"/>
    <property type="match status" value="2"/>
</dbReference>
<dbReference type="Gene3D" id="3.90.1440.10">
    <property type="entry name" value="SecA, preprotein cross-linking domain"/>
    <property type="match status" value="1"/>
</dbReference>
<dbReference type="HAMAP" id="MF_01382">
    <property type="entry name" value="SecA"/>
    <property type="match status" value="1"/>
</dbReference>
<dbReference type="InterPro" id="IPR014001">
    <property type="entry name" value="Helicase_ATP-bd"/>
</dbReference>
<dbReference type="InterPro" id="IPR027417">
    <property type="entry name" value="P-loop_NTPase"/>
</dbReference>
<dbReference type="InterPro" id="IPR004027">
    <property type="entry name" value="SEC_C_motif"/>
</dbReference>
<dbReference type="InterPro" id="IPR000185">
    <property type="entry name" value="SecA"/>
</dbReference>
<dbReference type="InterPro" id="IPR020937">
    <property type="entry name" value="SecA_CS"/>
</dbReference>
<dbReference type="InterPro" id="IPR011115">
    <property type="entry name" value="SecA_DEAD"/>
</dbReference>
<dbReference type="InterPro" id="IPR014018">
    <property type="entry name" value="SecA_motor_DEAD"/>
</dbReference>
<dbReference type="InterPro" id="IPR011130">
    <property type="entry name" value="SecA_preprotein_X-link_dom"/>
</dbReference>
<dbReference type="InterPro" id="IPR044722">
    <property type="entry name" value="SecA_SF2_C"/>
</dbReference>
<dbReference type="InterPro" id="IPR011116">
    <property type="entry name" value="SecA_Wing/Scaffold"/>
</dbReference>
<dbReference type="InterPro" id="IPR036266">
    <property type="entry name" value="SecA_Wing/Scaffold_sf"/>
</dbReference>
<dbReference type="InterPro" id="IPR036670">
    <property type="entry name" value="SecA_X-link_sf"/>
</dbReference>
<dbReference type="NCBIfam" id="NF009538">
    <property type="entry name" value="PRK12904.1"/>
    <property type="match status" value="1"/>
</dbReference>
<dbReference type="NCBIfam" id="TIGR00963">
    <property type="entry name" value="secA"/>
    <property type="match status" value="1"/>
</dbReference>
<dbReference type="PANTHER" id="PTHR30612:SF0">
    <property type="entry name" value="CHLOROPLAST PROTEIN-TRANSPORTING ATPASE"/>
    <property type="match status" value="1"/>
</dbReference>
<dbReference type="PANTHER" id="PTHR30612">
    <property type="entry name" value="SECA INNER MEMBRANE COMPONENT OF SEC PROTEIN SECRETION SYSTEM"/>
    <property type="match status" value="1"/>
</dbReference>
<dbReference type="Pfam" id="PF21090">
    <property type="entry name" value="P-loop_SecA"/>
    <property type="match status" value="1"/>
</dbReference>
<dbReference type="Pfam" id="PF02810">
    <property type="entry name" value="SEC-C"/>
    <property type="match status" value="1"/>
</dbReference>
<dbReference type="Pfam" id="PF07517">
    <property type="entry name" value="SecA_DEAD"/>
    <property type="match status" value="1"/>
</dbReference>
<dbReference type="Pfam" id="PF01043">
    <property type="entry name" value="SecA_PP_bind"/>
    <property type="match status" value="1"/>
</dbReference>
<dbReference type="Pfam" id="PF07516">
    <property type="entry name" value="SecA_SW"/>
    <property type="match status" value="1"/>
</dbReference>
<dbReference type="PRINTS" id="PR00906">
    <property type="entry name" value="SECA"/>
</dbReference>
<dbReference type="SMART" id="SM00957">
    <property type="entry name" value="SecA_DEAD"/>
    <property type="match status" value="1"/>
</dbReference>
<dbReference type="SMART" id="SM00958">
    <property type="entry name" value="SecA_PP_bind"/>
    <property type="match status" value="1"/>
</dbReference>
<dbReference type="SUPFAM" id="SSF81886">
    <property type="entry name" value="Helical scaffold and wing domains of SecA"/>
    <property type="match status" value="1"/>
</dbReference>
<dbReference type="SUPFAM" id="SSF52540">
    <property type="entry name" value="P-loop containing nucleoside triphosphate hydrolases"/>
    <property type="match status" value="2"/>
</dbReference>
<dbReference type="SUPFAM" id="SSF81767">
    <property type="entry name" value="Pre-protein crosslinking domain of SecA"/>
    <property type="match status" value="1"/>
</dbReference>
<dbReference type="PROSITE" id="PS01312">
    <property type="entry name" value="SECA"/>
    <property type="match status" value="1"/>
</dbReference>
<dbReference type="PROSITE" id="PS51196">
    <property type="entry name" value="SECA_MOTOR_DEAD"/>
    <property type="match status" value="1"/>
</dbReference>
<keyword id="KW-0067">ATP-binding</keyword>
<keyword id="KW-0997">Cell inner membrane</keyword>
<keyword id="KW-1003">Cell membrane</keyword>
<keyword id="KW-0963">Cytoplasm</keyword>
<keyword id="KW-0472">Membrane</keyword>
<keyword id="KW-0479">Metal-binding</keyword>
<keyword id="KW-0547">Nucleotide-binding</keyword>
<keyword id="KW-0653">Protein transport</keyword>
<keyword id="KW-1185">Reference proteome</keyword>
<keyword id="KW-1278">Translocase</keyword>
<keyword id="KW-0811">Translocation</keyword>
<keyword id="KW-0813">Transport</keyword>
<keyword id="KW-0862">Zinc</keyword>
<gene>
    <name evidence="1" type="primary">secA</name>
    <name type="ordered locus">ACP_2983</name>
</gene>
<sequence length="997" mass="112866">MIGSVLTKVFGTSNERVVKRLLPIVEQIGALEPEIEKLSDEQLRAKTAEFRAYIAKAVEGVDDEDEQHKAIQRALDDLMPEAFAVVREAGRRVLHMRHFDVQLIGGMVLHQGKIAEMKTGEGKTLVATLPCYLNALAGRGVHVVTVNDYLAKRDAEWMGKIYEFLGLTVGVIVHDLDDEQRRQAYAADITYGTNNEFGFDYLRDNMKFDLKDCVQRKHFYCIVDEVDSILIDEARTPLIISGPTDQTTDKYVRVNRIIPALEQGEEIEKGEEKILTGDFVVDEKHKTISVTDEGWEKIEQLLGIGNIADPENWDLKHHVETAIKAHSLYKRDVQYVVKDGEVIIVDEFTGRLMPGRRWSDGLHQSVEAKEGVNIRREDQTLATITFQNYFRLYKKLSGMTGTAETEAAEFDKIYKLEIVVIPTNRPLLRVENPDVVFRTTQEKYFAVADQIAELNKNNQPVLVGTTSIEKSELLSQILVRKGVKHVVLNAKYHEREAEIVAQAGRLGMVTIATNMAGRGTDILLGGNADFMAKQELLKKGMARSISPAEGAINPMAAQGMLRFYYQGQEFETTQENWDRVFAQHSASVAQEREQVLAAGGLYIIGTERHESRRVDNQLRGRAGRQGDPGASRFYLSLEDDLMRIFAREWVSTLLQRLGMEEGVPIESRMISNRIEKAQMAVEGQNFEARKHLLEYDDVMNKQREAVYGLRNQLLAGLDQKELIVEDYVPNILSGIFDEYAPEKQHADQWNWEEIRKKLIDHFGFDYQVDGLDVADLTRHELGEEVFSRLKERYLAKEQFIGEEPMRYHERMIMLSVLDGLWKDHLLNMDHLKEGIGLRGYGQQDPLIEYKRESFDMFEAMMNRFQEDTVRYLYLMQIVGPDGQPMQVPTRLRPADASPNGVVHAEPAPLNGSAPIPEQAAPPPPPAIPTRQPSTTIDAIEREFEKKKQQELSHARMAGGGDGSDAVNTRRVGEKVGRNDPCPCGSGKKYKKCHGAEA</sequence>
<organism>
    <name type="scientific">Acidobacterium capsulatum (strain ATCC 51196 / DSM 11244 / BCRC 80197 / JCM 7670 / NBRC 15755 / NCIMB 13165 / 161)</name>
    <dbReference type="NCBI Taxonomy" id="240015"/>
    <lineage>
        <taxon>Bacteria</taxon>
        <taxon>Pseudomonadati</taxon>
        <taxon>Acidobacteriota</taxon>
        <taxon>Terriglobia</taxon>
        <taxon>Terriglobales</taxon>
        <taxon>Acidobacteriaceae</taxon>
        <taxon>Acidobacterium</taxon>
    </lineage>
</organism>
<accession>C1F4E1</accession>
<proteinExistence type="inferred from homology"/>
<name>SECA_ACIC5</name>
<reference key="1">
    <citation type="journal article" date="2009" name="Appl. Environ. Microbiol.">
        <title>Three genomes from the phylum Acidobacteria provide insight into the lifestyles of these microorganisms in soils.</title>
        <authorList>
            <person name="Ward N.L."/>
            <person name="Challacombe J.F."/>
            <person name="Janssen P.H."/>
            <person name="Henrissat B."/>
            <person name="Coutinho P.M."/>
            <person name="Wu M."/>
            <person name="Xie G."/>
            <person name="Haft D.H."/>
            <person name="Sait M."/>
            <person name="Badger J."/>
            <person name="Barabote R.D."/>
            <person name="Bradley B."/>
            <person name="Brettin T.S."/>
            <person name="Brinkac L.M."/>
            <person name="Bruce D."/>
            <person name="Creasy T."/>
            <person name="Daugherty S.C."/>
            <person name="Davidsen T.M."/>
            <person name="DeBoy R.T."/>
            <person name="Detter J.C."/>
            <person name="Dodson R.J."/>
            <person name="Durkin A.S."/>
            <person name="Ganapathy A."/>
            <person name="Gwinn-Giglio M."/>
            <person name="Han C.S."/>
            <person name="Khouri H."/>
            <person name="Kiss H."/>
            <person name="Kothari S.P."/>
            <person name="Madupu R."/>
            <person name="Nelson K.E."/>
            <person name="Nelson W.C."/>
            <person name="Paulsen I."/>
            <person name="Penn K."/>
            <person name="Ren Q."/>
            <person name="Rosovitz M.J."/>
            <person name="Selengut J.D."/>
            <person name="Shrivastava S."/>
            <person name="Sullivan S.A."/>
            <person name="Tapia R."/>
            <person name="Thompson L.S."/>
            <person name="Watkins K.L."/>
            <person name="Yang Q."/>
            <person name="Yu C."/>
            <person name="Zafar N."/>
            <person name="Zhou L."/>
            <person name="Kuske C.R."/>
        </authorList>
    </citation>
    <scope>NUCLEOTIDE SEQUENCE [LARGE SCALE GENOMIC DNA]</scope>
    <source>
        <strain>ATCC 51196 / DSM 11244 / BCRC 80197 / JCM 7670 / NBRC 15755 / NCIMB 13165 / 161</strain>
    </source>
</reference>
<comment type="function">
    <text evidence="1">Part of the Sec protein translocase complex. Interacts with the SecYEG preprotein conducting channel. Has a central role in coupling the hydrolysis of ATP to the transfer of proteins into and across the cell membrane, serving as an ATP-driven molecular motor driving the stepwise translocation of polypeptide chains across the membrane.</text>
</comment>
<comment type="catalytic activity">
    <reaction evidence="1">
        <text>ATP + H2O + cellular proteinSide 1 = ADP + phosphate + cellular proteinSide 2.</text>
        <dbReference type="EC" id="7.4.2.8"/>
    </reaction>
</comment>
<comment type="cofactor">
    <cofactor evidence="1">
        <name>Zn(2+)</name>
        <dbReference type="ChEBI" id="CHEBI:29105"/>
    </cofactor>
    <text evidence="1">May bind 1 zinc ion per subunit.</text>
</comment>
<comment type="subunit">
    <text evidence="1">Monomer and homodimer. Part of the essential Sec protein translocation apparatus which comprises SecA, SecYEG and auxiliary proteins SecDF. Other proteins may also be involved.</text>
</comment>
<comment type="subcellular location">
    <subcellularLocation>
        <location evidence="1">Cell inner membrane</location>
        <topology evidence="1">Peripheral membrane protein</topology>
        <orientation evidence="1">Cytoplasmic side</orientation>
    </subcellularLocation>
    <subcellularLocation>
        <location evidence="1">Cytoplasm</location>
    </subcellularLocation>
    <text evidence="1">Distribution is 50-50.</text>
</comment>
<comment type="similarity">
    <text evidence="1">Belongs to the SecA family.</text>
</comment>
<feature type="chain" id="PRO_1000184210" description="Protein translocase subunit SecA">
    <location>
        <begin position="1"/>
        <end position="997"/>
    </location>
</feature>
<feature type="region of interest" description="Disordered" evidence="2">
    <location>
        <begin position="893"/>
        <end position="997"/>
    </location>
</feature>
<feature type="compositionally biased region" description="Basic and acidic residues" evidence="2">
    <location>
        <begin position="938"/>
        <end position="953"/>
    </location>
</feature>
<feature type="compositionally biased region" description="Basic residues" evidence="2">
    <location>
        <begin position="987"/>
        <end position="997"/>
    </location>
</feature>
<feature type="binding site" evidence="1">
    <location>
        <position position="102"/>
    </location>
    <ligand>
        <name>ATP</name>
        <dbReference type="ChEBI" id="CHEBI:30616"/>
    </ligand>
</feature>
<feature type="binding site" evidence="1">
    <location>
        <begin position="120"/>
        <end position="124"/>
    </location>
    <ligand>
        <name>ATP</name>
        <dbReference type="ChEBI" id="CHEBI:30616"/>
    </ligand>
</feature>
<feature type="binding site" evidence="1">
    <location>
        <position position="521"/>
    </location>
    <ligand>
        <name>ATP</name>
        <dbReference type="ChEBI" id="CHEBI:30616"/>
    </ligand>
</feature>
<feature type="binding site" evidence="1">
    <location>
        <position position="981"/>
    </location>
    <ligand>
        <name>Zn(2+)</name>
        <dbReference type="ChEBI" id="CHEBI:29105"/>
    </ligand>
</feature>
<feature type="binding site" evidence="1">
    <location>
        <position position="983"/>
    </location>
    <ligand>
        <name>Zn(2+)</name>
        <dbReference type="ChEBI" id="CHEBI:29105"/>
    </ligand>
</feature>
<feature type="binding site" evidence="1">
    <location>
        <position position="992"/>
    </location>
    <ligand>
        <name>Zn(2+)</name>
        <dbReference type="ChEBI" id="CHEBI:29105"/>
    </ligand>
</feature>
<feature type="binding site" evidence="1">
    <location>
        <position position="993"/>
    </location>
    <ligand>
        <name>Zn(2+)</name>
        <dbReference type="ChEBI" id="CHEBI:29105"/>
    </ligand>
</feature>
<protein>
    <recommendedName>
        <fullName evidence="1">Protein translocase subunit SecA</fullName>
        <ecNumber evidence="1">7.4.2.8</ecNumber>
    </recommendedName>
</protein>
<evidence type="ECO:0000255" key="1">
    <source>
        <dbReference type="HAMAP-Rule" id="MF_01382"/>
    </source>
</evidence>
<evidence type="ECO:0000256" key="2">
    <source>
        <dbReference type="SAM" id="MobiDB-lite"/>
    </source>
</evidence>